<name>SAHH_WHEAT</name>
<reference key="1">
    <citation type="submission" date="1993-03" db="EMBL/GenBank/DDBJ databases">
        <title>The influence of aluminium on histone, heat shock and S-adenosyl-L-homocysteine hydrolase gene expression in tolerant and sensitive cultivars of wheat.</title>
        <authorList>
            <person name="Richards K.D."/>
            <person name="Gardner R.C."/>
        </authorList>
    </citation>
    <scope>NUCLEOTIDE SEQUENCE [MRNA]</scope>
</reference>
<accession>P32112</accession>
<feature type="chain" id="PRO_0000116933" description="Adenosylhomocysteinase">
    <location>
        <begin position="1"/>
        <end position="485"/>
    </location>
</feature>
<feature type="binding site" evidence="1">
    <location>
        <position position="64"/>
    </location>
    <ligand>
        <name>substrate</name>
    </ligand>
</feature>
<feature type="binding site" evidence="1">
    <location>
        <position position="139"/>
    </location>
    <ligand>
        <name>substrate</name>
    </ligand>
</feature>
<feature type="binding site" evidence="1">
    <location>
        <position position="205"/>
    </location>
    <ligand>
        <name>substrate</name>
    </ligand>
</feature>
<feature type="binding site" evidence="1">
    <location>
        <begin position="206"/>
        <end position="208"/>
    </location>
    <ligand>
        <name>NAD(+)</name>
        <dbReference type="ChEBI" id="CHEBI:57540"/>
    </ligand>
</feature>
<feature type="binding site" evidence="1">
    <location>
        <position position="235"/>
    </location>
    <ligand>
        <name>substrate</name>
    </ligand>
</feature>
<feature type="binding site" evidence="1">
    <location>
        <position position="239"/>
    </location>
    <ligand>
        <name>substrate</name>
    </ligand>
</feature>
<feature type="binding site" evidence="1">
    <location>
        <position position="240"/>
    </location>
    <ligand>
        <name>NAD(+)</name>
        <dbReference type="ChEBI" id="CHEBI:57540"/>
    </ligand>
</feature>
<feature type="binding site" evidence="1">
    <location>
        <begin position="269"/>
        <end position="274"/>
    </location>
    <ligand>
        <name>NAD(+)</name>
        <dbReference type="ChEBI" id="CHEBI:57540"/>
    </ligand>
</feature>
<feature type="binding site" evidence="1">
    <location>
        <position position="292"/>
    </location>
    <ligand>
        <name>NAD(+)</name>
        <dbReference type="ChEBI" id="CHEBI:57540"/>
    </ligand>
</feature>
<feature type="binding site" evidence="1">
    <location>
        <position position="327"/>
    </location>
    <ligand>
        <name>NAD(+)</name>
        <dbReference type="ChEBI" id="CHEBI:57540"/>
    </ligand>
</feature>
<feature type="binding site" evidence="1">
    <location>
        <begin position="348"/>
        <end position="350"/>
    </location>
    <ligand>
        <name>NAD(+)</name>
        <dbReference type="ChEBI" id="CHEBI:57540"/>
    </ligand>
</feature>
<feature type="binding site" evidence="1">
    <location>
        <position position="397"/>
    </location>
    <ligand>
        <name>NAD(+)</name>
        <dbReference type="ChEBI" id="CHEBI:57540"/>
    </ligand>
</feature>
<organism>
    <name type="scientific">Triticum aestivum</name>
    <name type="common">Wheat</name>
    <dbReference type="NCBI Taxonomy" id="4565"/>
    <lineage>
        <taxon>Eukaryota</taxon>
        <taxon>Viridiplantae</taxon>
        <taxon>Streptophyta</taxon>
        <taxon>Embryophyta</taxon>
        <taxon>Tracheophyta</taxon>
        <taxon>Spermatophyta</taxon>
        <taxon>Magnoliopsida</taxon>
        <taxon>Liliopsida</taxon>
        <taxon>Poales</taxon>
        <taxon>Poaceae</taxon>
        <taxon>BOP clade</taxon>
        <taxon>Pooideae</taxon>
        <taxon>Triticodae</taxon>
        <taxon>Triticeae</taxon>
        <taxon>Triticinae</taxon>
        <taxon>Triticum</taxon>
    </lineage>
</organism>
<gene>
    <name type="primary">SAHH</name>
    <name type="synonym">SH6.2</name>
    <name type="synonym">SHH</name>
</gene>
<keyword id="KW-0378">Hydrolase</keyword>
<keyword id="KW-0520">NAD</keyword>
<keyword id="KW-0554">One-carbon metabolism</keyword>
<keyword id="KW-1185">Reference proteome</keyword>
<evidence type="ECO:0000250" key="1"/>
<evidence type="ECO:0000305" key="2"/>
<proteinExistence type="evidence at transcript level"/>
<dbReference type="EC" id="3.13.2.1"/>
<dbReference type="EMBL" id="L11872">
    <property type="protein sequence ID" value="AAA34303.1"/>
    <property type="molecule type" value="mRNA"/>
</dbReference>
<dbReference type="PIR" id="T06764">
    <property type="entry name" value="T06764"/>
</dbReference>
<dbReference type="SMR" id="P32112"/>
<dbReference type="STRING" id="4565.P32112"/>
<dbReference type="PaxDb" id="4565-Traes_2BL_2825A3D0F.1"/>
<dbReference type="eggNOG" id="KOG1370">
    <property type="taxonomic scope" value="Eukaryota"/>
</dbReference>
<dbReference type="UniPathway" id="UPA00314">
    <property type="reaction ID" value="UER00076"/>
</dbReference>
<dbReference type="Proteomes" id="UP000019116">
    <property type="component" value="Unplaced"/>
</dbReference>
<dbReference type="ExpressionAtlas" id="P32112">
    <property type="expression patterns" value="baseline and differential"/>
</dbReference>
<dbReference type="GO" id="GO:0005829">
    <property type="term" value="C:cytosol"/>
    <property type="evidence" value="ECO:0000318"/>
    <property type="project" value="GO_Central"/>
</dbReference>
<dbReference type="GO" id="GO:0004013">
    <property type="term" value="F:adenosylhomocysteinase activity"/>
    <property type="evidence" value="ECO:0000318"/>
    <property type="project" value="GO_Central"/>
</dbReference>
<dbReference type="GO" id="GO:0006730">
    <property type="term" value="P:one-carbon metabolic process"/>
    <property type="evidence" value="ECO:0007669"/>
    <property type="project" value="UniProtKB-KW"/>
</dbReference>
<dbReference type="GO" id="GO:0033353">
    <property type="term" value="P:S-adenosylmethionine cycle"/>
    <property type="evidence" value="ECO:0000318"/>
    <property type="project" value="GO_Central"/>
</dbReference>
<dbReference type="CDD" id="cd00401">
    <property type="entry name" value="SAHH"/>
    <property type="match status" value="1"/>
</dbReference>
<dbReference type="FunFam" id="3.40.50.720:FF:000004">
    <property type="entry name" value="Adenosylhomocysteinase"/>
    <property type="match status" value="1"/>
</dbReference>
<dbReference type="Gene3D" id="3.40.50.1480">
    <property type="entry name" value="Adenosylhomocysteinase-like"/>
    <property type="match status" value="1"/>
</dbReference>
<dbReference type="Gene3D" id="3.40.50.720">
    <property type="entry name" value="NAD(P)-binding Rossmann-like Domain"/>
    <property type="match status" value="1"/>
</dbReference>
<dbReference type="HAMAP" id="MF_00563">
    <property type="entry name" value="AdoHcyase"/>
    <property type="match status" value="1"/>
</dbReference>
<dbReference type="InterPro" id="IPR042172">
    <property type="entry name" value="Adenosylhomocyst_ase-like_sf"/>
</dbReference>
<dbReference type="InterPro" id="IPR000043">
    <property type="entry name" value="Adenosylhomocysteinase-like"/>
</dbReference>
<dbReference type="InterPro" id="IPR015878">
    <property type="entry name" value="Ado_hCys_hydrolase_NAD-bd"/>
</dbReference>
<dbReference type="InterPro" id="IPR036291">
    <property type="entry name" value="NAD(P)-bd_dom_sf"/>
</dbReference>
<dbReference type="InterPro" id="IPR020082">
    <property type="entry name" value="S-Ado-L-homoCys_hydrolase_CS"/>
</dbReference>
<dbReference type="NCBIfam" id="TIGR00936">
    <property type="entry name" value="ahcY"/>
    <property type="match status" value="1"/>
</dbReference>
<dbReference type="NCBIfam" id="NF004005">
    <property type="entry name" value="PRK05476.2-3"/>
    <property type="match status" value="1"/>
</dbReference>
<dbReference type="PANTHER" id="PTHR23420">
    <property type="entry name" value="ADENOSYLHOMOCYSTEINASE"/>
    <property type="match status" value="1"/>
</dbReference>
<dbReference type="PANTHER" id="PTHR23420:SF0">
    <property type="entry name" value="ADENOSYLHOMOCYSTEINASE"/>
    <property type="match status" value="1"/>
</dbReference>
<dbReference type="Pfam" id="PF05221">
    <property type="entry name" value="AdoHcyase"/>
    <property type="match status" value="1"/>
</dbReference>
<dbReference type="Pfam" id="PF00670">
    <property type="entry name" value="AdoHcyase_NAD"/>
    <property type="match status" value="1"/>
</dbReference>
<dbReference type="PIRSF" id="PIRSF001109">
    <property type="entry name" value="Ad_hcy_hydrolase"/>
    <property type="match status" value="1"/>
</dbReference>
<dbReference type="SMART" id="SM00996">
    <property type="entry name" value="AdoHcyase"/>
    <property type="match status" value="1"/>
</dbReference>
<dbReference type="SMART" id="SM00997">
    <property type="entry name" value="AdoHcyase_NAD"/>
    <property type="match status" value="1"/>
</dbReference>
<dbReference type="SUPFAM" id="SSF52283">
    <property type="entry name" value="Formate/glycerate dehydrogenase catalytic domain-like"/>
    <property type="match status" value="2"/>
</dbReference>
<dbReference type="SUPFAM" id="SSF51735">
    <property type="entry name" value="NAD(P)-binding Rossmann-fold domains"/>
    <property type="match status" value="1"/>
</dbReference>
<dbReference type="PROSITE" id="PS00738">
    <property type="entry name" value="ADOHCYASE_1"/>
    <property type="match status" value="1"/>
</dbReference>
<dbReference type="PROSITE" id="PS00739">
    <property type="entry name" value="ADOHCYASE_2"/>
    <property type="match status" value="1"/>
</dbReference>
<comment type="function">
    <text>Adenosylhomocysteine is a competitive inhibitor of S-adenosyl-L-methionine-dependent methyl transferase reactions; therefore adenosylhomocysteinase may play a key role in the control of methylations via regulation of the intracellular concentration of adenosylhomocysteine.</text>
</comment>
<comment type="catalytic activity">
    <reaction>
        <text>S-adenosyl-L-homocysteine + H2O = L-homocysteine + adenosine</text>
        <dbReference type="Rhea" id="RHEA:21708"/>
        <dbReference type="ChEBI" id="CHEBI:15377"/>
        <dbReference type="ChEBI" id="CHEBI:16335"/>
        <dbReference type="ChEBI" id="CHEBI:57856"/>
        <dbReference type="ChEBI" id="CHEBI:58199"/>
        <dbReference type="EC" id="3.13.2.1"/>
    </reaction>
</comment>
<comment type="cofactor">
    <cofactor>
        <name>NAD(+)</name>
        <dbReference type="ChEBI" id="CHEBI:57540"/>
    </cofactor>
    <text>Binds 1 NAD(+) per subunit.</text>
</comment>
<comment type="pathway">
    <text>Amino-acid biosynthesis; L-homocysteine biosynthesis; L-homocysteine from S-adenosyl-L-homocysteine: step 1/1.</text>
</comment>
<comment type="subunit">
    <text>Homotetramer.</text>
</comment>
<comment type="similarity">
    <text evidence="2">Belongs to the adenosylhomocysteinase family.</text>
</comment>
<protein>
    <recommendedName>
        <fullName>Adenosylhomocysteinase</fullName>
        <shortName>AdoHcyase</shortName>
        <ecNumber>3.13.2.1</ecNumber>
    </recommendedName>
    <alternativeName>
        <fullName>S-adenosyl-L-homocysteine hydrolase</fullName>
    </alternativeName>
</protein>
<sequence length="485" mass="53437">MALSVEKTSSGREYKVKDLFQADFGRLELELAEVEMPGLMACRTEFGPSQPFKGARISGSLHMTIQTAVLIETLTALGAEVRWCSCNIFSSQDHAAAAIARDSAAVFAWKGETLEEYWWCTERCLDWGVGGGPDLIVDDGGDATLLIHEGVKAEEEFEKSGKVPDPESTDNPEFKIVLTIIRDGLKTDASKYRKMKERLVGVSEETTTGVKRLYQMQESGTLLFPAINVNDSVTKSKFDNLYGCRHSLPDGLMRATDVMIAGKVAVVCGYGDVGKGCAAALKQAGARVIVTEIDPICALQALMEGIQILTLEDVVSEADIFVTTTGNKDIIMVDHMRKMKNNAIVCNIGHFDNEIDMNGLETYPGVKRITIKPQTDRWVFPETKTGIIVLAEGRLMNLGCATGHPSFVMSCSFTNQVIAQLELWNEKASGKYEKKVYVLPKHLDEKVAALHLGKLGARLTKLTKSQSDYISIPIEGPYKLRLYRY</sequence>